<evidence type="ECO:0000250" key="1"/>
<evidence type="ECO:0000255" key="2"/>
<evidence type="ECO:0000269" key="3">
    <source>
    </source>
</evidence>
<evidence type="ECO:0000269" key="4">
    <source ref="2"/>
</evidence>
<evidence type="ECO:0000305" key="5"/>
<evidence type="ECO:0000312" key="6">
    <source>
        <dbReference type="EMBL" id="AAM68388.1"/>
    </source>
</evidence>
<evidence type="ECO:0000312" key="7">
    <source>
        <dbReference type="EMBL" id="AAM69287.1"/>
    </source>
</evidence>
<evidence type="ECO:0000312" key="8">
    <source>
        <dbReference type="EMBL" id="BAD83885.1"/>
    </source>
</evidence>
<evidence type="ECO:0000312" key="9">
    <source>
        <dbReference type="EMBL" id="BAD83887.1"/>
    </source>
</evidence>
<evidence type="ECO:0000312" key="10">
    <source>
        <dbReference type="EMBL" id="BAD83889.1"/>
    </source>
</evidence>
<evidence type="ECO:0000312" key="11">
    <source>
        <dbReference type="EMBL" id="BAD83891.1"/>
    </source>
</evidence>
<evidence type="ECO:0000312" key="12">
    <source>
        <dbReference type="EMBL" id="BAD83893.1"/>
    </source>
</evidence>
<evidence type="ECO:0000312" key="13">
    <source>
        <dbReference type="EMBL" id="BAD83894.1"/>
    </source>
</evidence>
<evidence type="ECO:0000312" key="14">
    <source>
        <dbReference type="EMBL" id="BAD83895.1"/>
    </source>
</evidence>
<evidence type="ECO:0000312" key="15">
    <source>
        <dbReference type="EMBL" id="BAD83896.1"/>
    </source>
</evidence>
<evidence type="ECO:0000312" key="16">
    <source>
        <dbReference type="EMBL" id="BAD83897.1"/>
    </source>
</evidence>
<evidence type="ECO:0000312" key="17">
    <source>
        <dbReference type="EMBL" id="BAD83899.1"/>
    </source>
</evidence>
<evidence type="ECO:0000312" key="18">
    <source>
        <dbReference type="EMBL" id="BAD83900.1"/>
    </source>
</evidence>
<evidence type="ECO:0000312" key="19">
    <source>
        <dbReference type="EMBL" id="BAD83901.1"/>
    </source>
</evidence>
<evidence type="ECO:0000312" key="20">
    <source>
        <dbReference type="EMBL" id="BAD83902.1"/>
    </source>
</evidence>
<evidence type="ECO:0000312" key="21">
    <source>
        <dbReference type="EMBL" id="BAD83903.1"/>
    </source>
</evidence>
<evidence type="ECO:0000312" key="22">
    <source>
        <dbReference type="EMBL" id="BAD83904.1"/>
    </source>
</evidence>
<evidence type="ECO:0000312" key="23">
    <source>
        <dbReference type="EMBL" id="BAD83905.1"/>
    </source>
</evidence>
<evidence type="ECO:0000312" key="24">
    <source>
        <dbReference type="EMBL" id="BAD83907.1"/>
    </source>
</evidence>
<evidence type="ECO:0000312" key="25">
    <source>
        <dbReference type="EMBL" id="BAD83910.1"/>
    </source>
</evidence>
<evidence type="ECO:0000312" key="26">
    <source>
        <dbReference type="EMBL" id="BAD83911.1"/>
    </source>
</evidence>
<evidence type="ECO:0000312" key="27">
    <source>
        <dbReference type="EMBL" id="BAD83912.1"/>
    </source>
</evidence>
<evidence type="ECO:0000312" key="28">
    <source>
        <dbReference type="EMBL" id="BAD83913.1"/>
    </source>
</evidence>
<evidence type="ECO:0000312" key="29">
    <source>
        <dbReference type="EMBL" id="BAD83915.1"/>
    </source>
</evidence>
<name>OB57D_DROME</name>
<keyword id="KW-1015">Disulfide bond</keyword>
<keyword id="KW-0552">Olfaction</keyword>
<keyword id="KW-1185">Reference proteome</keyword>
<keyword id="KW-0716">Sensory transduction</keyword>
<keyword id="KW-0732">Signal</keyword>
<keyword id="KW-0813">Transport</keyword>
<dbReference type="EMBL" id="AF457149">
    <property type="protein sequence ID" value="AAM69287.1"/>
    <property type="molecule type" value="mRNA"/>
</dbReference>
<dbReference type="EMBL" id="AB189644">
    <property type="protein sequence ID" value="BAD83885.1"/>
    <property type="molecule type" value="Genomic_DNA"/>
</dbReference>
<dbReference type="EMBL" id="AB189645">
    <property type="protein sequence ID" value="BAD83887.1"/>
    <property type="molecule type" value="Genomic_DNA"/>
</dbReference>
<dbReference type="EMBL" id="AB189646">
    <property type="protein sequence ID" value="BAD83889.1"/>
    <property type="molecule type" value="Genomic_DNA"/>
</dbReference>
<dbReference type="EMBL" id="AB189647">
    <property type="protein sequence ID" value="BAD83891.1"/>
    <property type="molecule type" value="Genomic_DNA"/>
</dbReference>
<dbReference type="EMBL" id="AB189648">
    <property type="protein sequence ID" value="BAD83893.1"/>
    <property type="molecule type" value="Genomic_DNA"/>
</dbReference>
<dbReference type="EMBL" id="AB189649">
    <property type="protein sequence ID" value="BAD83894.1"/>
    <property type="molecule type" value="Genomic_DNA"/>
</dbReference>
<dbReference type="EMBL" id="AB189650">
    <property type="protein sequence ID" value="BAD83895.1"/>
    <property type="molecule type" value="Genomic_DNA"/>
</dbReference>
<dbReference type="EMBL" id="AB189651">
    <property type="protein sequence ID" value="BAD83896.1"/>
    <property type="molecule type" value="Genomic_DNA"/>
</dbReference>
<dbReference type="EMBL" id="AB189652">
    <property type="protein sequence ID" value="BAD83897.1"/>
    <property type="molecule type" value="Genomic_DNA"/>
</dbReference>
<dbReference type="EMBL" id="AB189653">
    <property type="protein sequence ID" value="BAD83898.1"/>
    <property type="molecule type" value="Genomic_DNA"/>
</dbReference>
<dbReference type="EMBL" id="AB189654">
    <property type="protein sequence ID" value="BAD83899.1"/>
    <property type="molecule type" value="Genomic_DNA"/>
</dbReference>
<dbReference type="EMBL" id="AB189655">
    <property type="protein sequence ID" value="BAD83900.1"/>
    <property type="molecule type" value="Genomic_DNA"/>
</dbReference>
<dbReference type="EMBL" id="AB189656">
    <property type="protein sequence ID" value="BAD83901.1"/>
    <property type="molecule type" value="Genomic_DNA"/>
</dbReference>
<dbReference type="EMBL" id="AB189657">
    <property type="protein sequence ID" value="BAD83902.1"/>
    <property type="molecule type" value="Genomic_DNA"/>
</dbReference>
<dbReference type="EMBL" id="AB189658">
    <property type="protein sequence ID" value="BAD83903.1"/>
    <property type="molecule type" value="Genomic_DNA"/>
</dbReference>
<dbReference type="EMBL" id="AB189659">
    <property type="protein sequence ID" value="BAD83904.1"/>
    <property type="molecule type" value="Genomic_DNA"/>
</dbReference>
<dbReference type="EMBL" id="AB189660">
    <property type="protein sequence ID" value="BAD83905.1"/>
    <property type="molecule type" value="Genomic_DNA"/>
</dbReference>
<dbReference type="EMBL" id="AB189661">
    <property type="protein sequence ID" value="BAD83907.1"/>
    <property type="molecule type" value="Genomic_DNA"/>
</dbReference>
<dbReference type="EMBL" id="AB189663">
    <property type="protein sequence ID" value="BAD83910.1"/>
    <property type="molecule type" value="Genomic_DNA"/>
</dbReference>
<dbReference type="EMBL" id="AB189664">
    <property type="protein sequence ID" value="BAD83911.1"/>
    <property type="molecule type" value="Genomic_DNA"/>
</dbReference>
<dbReference type="EMBL" id="AB189665">
    <property type="protein sequence ID" value="BAD83912.1"/>
    <property type="molecule type" value="Genomic_DNA"/>
</dbReference>
<dbReference type="EMBL" id="AB189666">
    <property type="protein sequence ID" value="BAD83913.1"/>
    <property type="molecule type" value="Genomic_DNA"/>
</dbReference>
<dbReference type="EMBL" id="AB189667">
    <property type="protein sequence ID" value="BAD83915.1"/>
    <property type="molecule type" value="Genomic_DNA"/>
</dbReference>
<dbReference type="EMBL" id="AE013599">
    <property type="protein sequence ID" value="AAM68388.1"/>
    <property type="molecule type" value="Genomic_DNA"/>
</dbReference>
<dbReference type="RefSeq" id="NP_725973.1">
    <property type="nucleotide sequence ID" value="NM_166397.3"/>
</dbReference>
<dbReference type="FunCoup" id="Q8MMF9">
    <property type="interactions" value="2"/>
</dbReference>
<dbReference type="STRING" id="7227.FBpp0289082"/>
<dbReference type="PaxDb" id="7227-FBpp0289082"/>
<dbReference type="DNASU" id="246671"/>
<dbReference type="EnsemblMetazoa" id="FBtr0299804">
    <property type="protein sequence ID" value="FBpp0289082"/>
    <property type="gene ID" value="FBgn0043536"/>
</dbReference>
<dbReference type="GeneID" id="246671"/>
<dbReference type="KEGG" id="dme:Dmel_CG30150"/>
<dbReference type="AGR" id="FB:FBgn0043536"/>
<dbReference type="CTD" id="246671"/>
<dbReference type="FlyBase" id="FBgn0043536">
    <property type="gene designation" value="Obp57d"/>
</dbReference>
<dbReference type="VEuPathDB" id="VectorBase:FBgn0043536"/>
<dbReference type="GeneTree" id="ENSGT00940000176564"/>
<dbReference type="HOGENOM" id="CLU_154821_0_0_1"/>
<dbReference type="InParanoid" id="Q8MMF9"/>
<dbReference type="OrthoDB" id="7847042at2759"/>
<dbReference type="BioGRID-ORCS" id="246671">
    <property type="hits" value="0 hits in 1 CRISPR screen"/>
</dbReference>
<dbReference type="ChiTaRS" id="Obp57d">
    <property type="organism name" value="fly"/>
</dbReference>
<dbReference type="GenomeRNAi" id="246671"/>
<dbReference type="PRO" id="PR:Q8MMF9"/>
<dbReference type="Proteomes" id="UP000000803">
    <property type="component" value="Chromosome 2R"/>
</dbReference>
<dbReference type="Bgee" id="FBgn0043536">
    <property type="expression patterns" value="Expressed in larva and 1 other cell type or tissue"/>
</dbReference>
<dbReference type="GO" id="GO:0005576">
    <property type="term" value="C:extracellular region"/>
    <property type="evidence" value="ECO:0000255"/>
    <property type="project" value="FlyBase"/>
</dbReference>
<dbReference type="GO" id="GO:0005615">
    <property type="term" value="C:extracellular space"/>
    <property type="evidence" value="ECO:0000318"/>
    <property type="project" value="GO_Central"/>
</dbReference>
<dbReference type="GO" id="GO:0005549">
    <property type="term" value="F:odorant binding"/>
    <property type="evidence" value="ECO:0000250"/>
    <property type="project" value="FlyBase"/>
</dbReference>
<dbReference type="GO" id="GO:1990834">
    <property type="term" value="P:response to odorant"/>
    <property type="evidence" value="ECO:0000303"/>
    <property type="project" value="UniProtKB"/>
</dbReference>
<dbReference type="GO" id="GO:0007606">
    <property type="term" value="P:sensory perception of chemical stimulus"/>
    <property type="evidence" value="ECO:0000250"/>
    <property type="project" value="FlyBase"/>
</dbReference>
<dbReference type="GO" id="GO:0007608">
    <property type="term" value="P:sensory perception of smell"/>
    <property type="evidence" value="ECO:0000318"/>
    <property type="project" value="GO_Central"/>
</dbReference>
<dbReference type="CDD" id="cd23992">
    <property type="entry name" value="PBP_GOBP"/>
    <property type="match status" value="1"/>
</dbReference>
<dbReference type="Gene3D" id="1.10.238.20">
    <property type="entry name" value="Pheromone/general odorant binding protein domain"/>
    <property type="match status" value="1"/>
</dbReference>
<dbReference type="InterPro" id="IPR006170">
    <property type="entry name" value="PBP/GOBP"/>
</dbReference>
<dbReference type="InterPro" id="IPR036728">
    <property type="entry name" value="PBP_GOBP_sf"/>
</dbReference>
<dbReference type="Pfam" id="PF01395">
    <property type="entry name" value="PBP_GOBP"/>
    <property type="match status" value="1"/>
</dbReference>
<dbReference type="SUPFAM" id="SSF47565">
    <property type="entry name" value="Insect pheromone/odorant-binding proteins"/>
    <property type="match status" value="1"/>
</dbReference>
<sequence>MPEKMSLRLVPHLACIIFILEIQFRIADSNDPCPHNQGIDEDIAESILGDWPANVDLTSVKRSHKCYVTCILQYYNIVTTSGEIFLDKYYDTGVIDELAVAPKINRCRYEFRMETDYCSRIFAIFNCLRQEILTKS</sequence>
<proteinExistence type="evidence at transcript level"/>
<gene>
    <name evidence="6" type="primary">Obp57d</name>
    <name type="ORF">CG30150</name>
</gene>
<comment type="function">
    <text evidence="5">Present in the aqueous fluid surrounding olfactory sensory dendrites and are thought to aid in the capture and transport of hydrophobic odorants into and through this fluid.</text>
</comment>
<comment type="similarity">
    <text evidence="2">Belongs to the PBP/GOBP family.</text>
</comment>
<reference evidence="7" key="1">
    <citation type="journal article" date="2002" name="Gene">
        <title>The odorant-binding proteins of Drosophila melanogaster: annotation and characterization of a divergent gene family.</title>
        <authorList>
            <person name="Graham L.A."/>
            <person name="Davies P.L."/>
        </authorList>
    </citation>
    <scope>NUCLEOTIDE SEQUENCE [MRNA]</scope>
    <source>
        <strain evidence="7">Canton-S</strain>
    </source>
</reference>
<reference evidence="23" key="2">
    <citation type="submission" date="2004-09" db="EMBL/GenBank/DDBJ databases">
        <title>A high frequency null mutant of an odrant-binding protein gene, Obp57e, in Drosophila melanogaster.</title>
        <authorList>
            <person name="Takahashi A."/>
            <person name="Takano-Shimizu T."/>
        </authorList>
    </citation>
    <scope>NUCLEOTIDE SEQUENCE [GENOMIC DNA]</scope>
    <source>
        <strain evidence="25">Algeria</strain>
        <strain evidence="27">CA1</strain>
        <strain evidence="29">KSA2</strain>
        <strain evidence="13">KY02001G20</strain>
        <strain evidence="14">KY02002G20</strain>
        <strain evidence="15">KY02003G20</strain>
        <strain evidence="16">KY02006G20</strain>
        <strain evidence="17">KY02010G20</strain>
        <strain evidence="8">KY02013G20</strain>
        <strain evidence="10">KY02016G18</strain>
        <strain evidence="18">KY02070G20</strain>
        <strain evidence="9">KY02073G20</strain>
        <strain evidence="19">KY02074G20</strain>
        <strain evidence="12">KY02101G9</strain>
        <strain evidence="20">KY02102G9</strain>
        <strain evidence="21">KY02104G9</strain>
        <strain evidence="11">KY02106G9</strain>
        <strain evidence="22">KY02109G9</strain>
        <strain evidence="23">MEL6G59</strain>
        <strain evidence="26">MEL7</strain>
        <strain evidence="28">MEL8</strain>
        <strain evidence="24">TaiwanG23</strain>
    </source>
</reference>
<reference evidence="5 6" key="3">
    <citation type="journal article" date="2000" name="Science">
        <title>The genome sequence of Drosophila melanogaster.</title>
        <authorList>
            <person name="Adams M.D."/>
            <person name="Celniker S.E."/>
            <person name="Holt R.A."/>
            <person name="Evans C.A."/>
            <person name="Gocayne J.D."/>
            <person name="Amanatides P.G."/>
            <person name="Scherer S.E."/>
            <person name="Li P.W."/>
            <person name="Hoskins R.A."/>
            <person name="Galle R.F."/>
            <person name="George R.A."/>
            <person name="Lewis S.E."/>
            <person name="Richards S."/>
            <person name="Ashburner M."/>
            <person name="Henderson S.N."/>
            <person name="Sutton G.G."/>
            <person name="Wortman J.R."/>
            <person name="Yandell M.D."/>
            <person name="Zhang Q."/>
            <person name="Chen L.X."/>
            <person name="Brandon R.C."/>
            <person name="Rogers Y.-H.C."/>
            <person name="Blazej R.G."/>
            <person name="Champe M."/>
            <person name="Pfeiffer B.D."/>
            <person name="Wan K.H."/>
            <person name="Doyle C."/>
            <person name="Baxter E.G."/>
            <person name="Helt G."/>
            <person name="Nelson C.R."/>
            <person name="Miklos G.L.G."/>
            <person name="Abril J.F."/>
            <person name="Agbayani A."/>
            <person name="An H.-J."/>
            <person name="Andrews-Pfannkoch C."/>
            <person name="Baldwin D."/>
            <person name="Ballew R.M."/>
            <person name="Basu A."/>
            <person name="Baxendale J."/>
            <person name="Bayraktaroglu L."/>
            <person name="Beasley E.M."/>
            <person name="Beeson K.Y."/>
            <person name="Benos P.V."/>
            <person name="Berman B.P."/>
            <person name="Bhandari D."/>
            <person name="Bolshakov S."/>
            <person name="Borkova D."/>
            <person name="Botchan M.R."/>
            <person name="Bouck J."/>
            <person name="Brokstein P."/>
            <person name="Brottier P."/>
            <person name="Burtis K.C."/>
            <person name="Busam D.A."/>
            <person name="Butler H."/>
            <person name="Cadieu E."/>
            <person name="Center A."/>
            <person name="Chandra I."/>
            <person name="Cherry J.M."/>
            <person name="Cawley S."/>
            <person name="Dahlke C."/>
            <person name="Davenport L.B."/>
            <person name="Davies P."/>
            <person name="de Pablos B."/>
            <person name="Delcher A."/>
            <person name="Deng Z."/>
            <person name="Mays A.D."/>
            <person name="Dew I."/>
            <person name="Dietz S.M."/>
            <person name="Dodson K."/>
            <person name="Doup L.E."/>
            <person name="Downes M."/>
            <person name="Dugan-Rocha S."/>
            <person name="Dunkov B.C."/>
            <person name="Dunn P."/>
            <person name="Durbin K.J."/>
            <person name="Evangelista C.C."/>
            <person name="Ferraz C."/>
            <person name="Ferriera S."/>
            <person name="Fleischmann W."/>
            <person name="Fosler C."/>
            <person name="Gabrielian A.E."/>
            <person name="Garg N.S."/>
            <person name="Gelbart W.M."/>
            <person name="Glasser K."/>
            <person name="Glodek A."/>
            <person name="Gong F."/>
            <person name="Gorrell J.H."/>
            <person name="Gu Z."/>
            <person name="Guan P."/>
            <person name="Harris M."/>
            <person name="Harris N.L."/>
            <person name="Harvey D.A."/>
            <person name="Heiman T.J."/>
            <person name="Hernandez J.R."/>
            <person name="Houck J."/>
            <person name="Hostin D."/>
            <person name="Houston K.A."/>
            <person name="Howland T.J."/>
            <person name="Wei M.-H."/>
            <person name="Ibegwam C."/>
            <person name="Jalali M."/>
            <person name="Kalush F."/>
            <person name="Karpen G.H."/>
            <person name="Ke Z."/>
            <person name="Kennison J.A."/>
            <person name="Ketchum K.A."/>
            <person name="Kimmel B.E."/>
            <person name="Kodira C.D."/>
            <person name="Kraft C.L."/>
            <person name="Kravitz S."/>
            <person name="Kulp D."/>
            <person name="Lai Z."/>
            <person name="Lasko P."/>
            <person name="Lei Y."/>
            <person name="Levitsky A.A."/>
            <person name="Li J.H."/>
            <person name="Li Z."/>
            <person name="Liang Y."/>
            <person name="Lin X."/>
            <person name="Liu X."/>
            <person name="Mattei B."/>
            <person name="McIntosh T.C."/>
            <person name="McLeod M.P."/>
            <person name="McPherson D."/>
            <person name="Merkulov G."/>
            <person name="Milshina N.V."/>
            <person name="Mobarry C."/>
            <person name="Morris J."/>
            <person name="Moshrefi A."/>
            <person name="Mount S.M."/>
            <person name="Moy M."/>
            <person name="Murphy B."/>
            <person name="Murphy L."/>
            <person name="Muzny D.M."/>
            <person name="Nelson D.L."/>
            <person name="Nelson D.R."/>
            <person name="Nelson K.A."/>
            <person name="Nixon K."/>
            <person name="Nusskern D.R."/>
            <person name="Pacleb J.M."/>
            <person name="Palazzolo M."/>
            <person name="Pittman G.S."/>
            <person name="Pan S."/>
            <person name="Pollard J."/>
            <person name="Puri V."/>
            <person name="Reese M.G."/>
            <person name="Reinert K."/>
            <person name="Remington K."/>
            <person name="Saunders R.D.C."/>
            <person name="Scheeler F."/>
            <person name="Shen H."/>
            <person name="Shue B.C."/>
            <person name="Siden-Kiamos I."/>
            <person name="Simpson M."/>
            <person name="Skupski M.P."/>
            <person name="Smith T.J."/>
            <person name="Spier E."/>
            <person name="Spradling A.C."/>
            <person name="Stapleton M."/>
            <person name="Strong R."/>
            <person name="Sun E."/>
            <person name="Svirskas R."/>
            <person name="Tector C."/>
            <person name="Turner R."/>
            <person name="Venter E."/>
            <person name="Wang A.H."/>
            <person name="Wang X."/>
            <person name="Wang Z.-Y."/>
            <person name="Wassarman D.A."/>
            <person name="Weinstock G.M."/>
            <person name="Weissenbach J."/>
            <person name="Williams S.M."/>
            <person name="Woodage T."/>
            <person name="Worley K.C."/>
            <person name="Wu D."/>
            <person name="Yang S."/>
            <person name="Yao Q.A."/>
            <person name="Ye J."/>
            <person name="Yeh R.-F."/>
            <person name="Zaveri J.S."/>
            <person name="Zhan M."/>
            <person name="Zhang G."/>
            <person name="Zhao Q."/>
            <person name="Zheng L."/>
            <person name="Zheng X.H."/>
            <person name="Zhong F.N."/>
            <person name="Zhong W."/>
            <person name="Zhou X."/>
            <person name="Zhu S.C."/>
            <person name="Zhu X."/>
            <person name="Smith H.O."/>
            <person name="Gibbs R.A."/>
            <person name="Myers E.W."/>
            <person name="Rubin G.M."/>
            <person name="Venter J.C."/>
        </authorList>
    </citation>
    <scope>NUCLEOTIDE SEQUENCE [LARGE SCALE GENOMIC DNA]</scope>
    <source>
        <strain evidence="3">Berkeley</strain>
    </source>
</reference>
<reference evidence="5 6" key="4">
    <citation type="journal article" date="2002" name="Genome Biol.">
        <title>Annotation of the Drosophila melanogaster euchromatic genome: a systematic review.</title>
        <authorList>
            <person name="Misra S."/>
            <person name="Crosby M.A."/>
            <person name="Mungall C.J."/>
            <person name="Matthews B.B."/>
            <person name="Campbell K.S."/>
            <person name="Hradecky P."/>
            <person name="Huang Y."/>
            <person name="Kaminker J.S."/>
            <person name="Millburn G.H."/>
            <person name="Prochnik S.E."/>
            <person name="Smith C.D."/>
            <person name="Tupy J.L."/>
            <person name="Whitfield E.J."/>
            <person name="Bayraktaroglu L."/>
            <person name="Berman B.P."/>
            <person name="Bettencourt B.R."/>
            <person name="Celniker S.E."/>
            <person name="de Grey A.D.N.J."/>
            <person name="Drysdale R.A."/>
            <person name="Harris N.L."/>
            <person name="Richter J."/>
            <person name="Russo S."/>
            <person name="Schroeder A.J."/>
            <person name="Shu S.Q."/>
            <person name="Stapleton M."/>
            <person name="Yamada C."/>
            <person name="Ashburner M."/>
            <person name="Gelbart W.M."/>
            <person name="Rubin G.M."/>
            <person name="Lewis S.E."/>
        </authorList>
    </citation>
    <scope>GENOME REANNOTATION</scope>
    <source>
        <strain>Berkeley</strain>
    </source>
</reference>
<reference evidence="5" key="5">
    <citation type="journal article" date="2002" name="Genome Res.">
        <title>Genome-wide analysis of the odorant-binding protein gene family in Drosophila melanogaster.</title>
        <authorList>
            <person name="Hekmat-Scafe D.S."/>
            <person name="Scafe C.R."/>
            <person name="McKinney A.J."/>
            <person name="Tanouye M.A."/>
        </authorList>
    </citation>
    <scope>IDENTIFICATION</scope>
</reference>
<accession>Q8MMF9</accession>
<accession>Q5KS14</accession>
<accession>Q5KS20</accession>
<accession>Q5KS26</accession>
<accession>Q5KS32</accession>
<accession>Q5KS34</accession>
<accession>Q8MVX5</accession>
<organism>
    <name type="scientific">Drosophila melanogaster</name>
    <name type="common">Fruit fly</name>
    <dbReference type="NCBI Taxonomy" id="7227"/>
    <lineage>
        <taxon>Eukaryota</taxon>
        <taxon>Metazoa</taxon>
        <taxon>Ecdysozoa</taxon>
        <taxon>Arthropoda</taxon>
        <taxon>Hexapoda</taxon>
        <taxon>Insecta</taxon>
        <taxon>Pterygota</taxon>
        <taxon>Neoptera</taxon>
        <taxon>Endopterygota</taxon>
        <taxon>Diptera</taxon>
        <taxon>Brachycera</taxon>
        <taxon>Muscomorpha</taxon>
        <taxon>Ephydroidea</taxon>
        <taxon>Drosophilidae</taxon>
        <taxon>Drosophila</taxon>
        <taxon>Sophophora</taxon>
    </lineage>
</organism>
<feature type="signal peptide" evidence="2">
    <location>
        <begin position="1"/>
        <end position="29"/>
    </location>
</feature>
<feature type="chain" id="PRO_0000012575" description="General odorant-binding protein 57d" evidence="2">
    <location>
        <begin position="30"/>
        <end position="136"/>
    </location>
</feature>
<feature type="disulfide bond" evidence="1">
    <location>
        <begin position="33"/>
        <end position="70"/>
    </location>
</feature>
<feature type="disulfide bond" evidence="1">
    <location>
        <begin position="66"/>
        <end position="118"/>
    </location>
</feature>
<feature type="disulfide bond" evidence="1">
    <location>
        <begin position="107"/>
        <end position="127"/>
    </location>
</feature>
<feature type="sequence variant" description="In strain: Canton-S, KY02013G20 and KY02073G20.">
    <original>V</original>
    <variation>I</variation>
    <location>
        <position position="10"/>
    </location>
</feature>
<feature type="sequence variant" description="In strain: KY02106G9 and MEL6G59.">
    <original>D</original>
    <variation>E</variation>
    <location>
        <position position="28"/>
    </location>
</feature>
<feature type="sequence variant" description="In strain: Canton-S, KY02010G20, KY02013G20 and KY02073G20.">
    <original>T</original>
    <variation>I</variation>
    <location>
        <position position="58"/>
    </location>
</feature>
<feature type="sequence variant" description="In strain: KY02106G9." evidence="4">
    <original>D</original>
    <variation>E</variation>
    <location>
        <position position="87"/>
    </location>
</feature>
<feature type="sequence variant" description="In strain: Canton-S, KY02010G20, KY02073G20 and KY02013G20.">
    <original>D</original>
    <variation>N</variation>
    <location>
        <position position="87"/>
    </location>
</feature>
<feature type="sequence variant" description="In strain: KY02106G9." evidence="4">
    <original>A</original>
    <variation>T</variation>
    <location>
        <position position="99"/>
    </location>
</feature>
<feature type="sequence conflict" description="In Ref. 3; AAM68388." evidence="5" ref="3">
    <original>T</original>
    <variation>A</variation>
    <location>
        <position position="80"/>
    </location>
</feature>
<protein>
    <recommendedName>
        <fullName>General odorant-binding protein 57d</fullName>
    </recommendedName>
</protein>